<protein>
    <recommendedName>
        <fullName evidence="1">Alanine--tRNA ligase</fullName>
        <ecNumber evidence="1">6.1.1.7</ecNumber>
    </recommendedName>
    <alternativeName>
        <fullName evidence="1">Alanyl-tRNA synthetase</fullName>
        <shortName evidence="1">AlaRS</shortName>
    </alternativeName>
</protein>
<accession>Q97Q48</accession>
<dbReference type="EC" id="6.1.1.7" evidence="1"/>
<dbReference type="EMBL" id="AE005672">
    <property type="protein sequence ID" value="AAK75481.1"/>
    <property type="molecule type" value="Genomic_DNA"/>
</dbReference>
<dbReference type="PIR" id="H95160">
    <property type="entry name" value="H95160"/>
</dbReference>
<dbReference type="RefSeq" id="WP_000811773.1">
    <property type="nucleotide sequence ID" value="NC_003028.3"/>
</dbReference>
<dbReference type="SMR" id="Q97Q48"/>
<dbReference type="ChEMBL" id="CHEMBL5858"/>
<dbReference type="PaxDb" id="170187-SP_1383"/>
<dbReference type="EnsemblBacteria" id="AAK75481">
    <property type="protein sequence ID" value="AAK75481"/>
    <property type="gene ID" value="SP_1383"/>
</dbReference>
<dbReference type="KEGG" id="spn:SP_1383"/>
<dbReference type="eggNOG" id="COG0013">
    <property type="taxonomic scope" value="Bacteria"/>
</dbReference>
<dbReference type="PhylomeDB" id="Q97Q48"/>
<dbReference type="BioCyc" id="SPNE170187:G1FZB-1392-MONOMER"/>
<dbReference type="PRO" id="PR:Q97Q48"/>
<dbReference type="Proteomes" id="UP000000585">
    <property type="component" value="Chromosome"/>
</dbReference>
<dbReference type="GO" id="GO:0005829">
    <property type="term" value="C:cytosol"/>
    <property type="evidence" value="ECO:0007669"/>
    <property type="project" value="TreeGrafter"/>
</dbReference>
<dbReference type="GO" id="GO:0004813">
    <property type="term" value="F:alanine-tRNA ligase activity"/>
    <property type="evidence" value="ECO:0007669"/>
    <property type="project" value="UniProtKB-UniRule"/>
</dbReference>
<dbReference type="GO" id="GO:0002161">
    <property type="term" value="F:aminoacyl-tRNA deacylase activity"/>
    <property type="evidence" value="ECO:0007669"/>
    <property type="project" value="TreeGrafter"/>
</dbReference>
<dbReference type="GO" id="GO:0005524">
    <property type="term" value="F:ATP binding"/>
    <property type="evidence" value="ECO:0007669"/>
    <property type="project" value="UniProtKB-UniRule"/>
</dbReference>
<dbReference type="GO" id="GO:0140096">
    <property type="term" value="F:catalytic activity, acting on a protein"/>
    <property type="evidence" value="ECO:0007669"/>
    <property type="project" value="UniProtKB-ARBA"/>
</dbReference>
<dbReference type="GO" id="GO:0016740">
    <property type="term" value="F:transferase activity"/>
    <property type="evidence" value="ECO:0007669"/>
    <property type="project" value="UniProtKB-ARBA"/>
</dbReference>
<dbReference type="GO" id="GO:0000049">
    <property type="term" value="F:tRNA binding"/>
    <property type="evidence" value="ECO:0007669"/>
    <property type="project" value="UniProtKB-KW"/>
</dbReference>
<dbReference type="GO" id="GO:0008270">
    <property type="term" value="F:zinc ion binding"/>
    <property type="evidence" value="ECO:0007669"/>
    <property type="project" value="UniProtKB-UniRule"/>
</dbReference>
<dbReference type="GO" id="GO:0006419">
    <property type="term" value="P:alanyl-tRNA aminoacylation"/>
    <property type="evidence" value="ECO:0007669"/>
    <property type="project" value="UniProtKB-UniRule"/>
</dbReference>
<dbReference type="CDD" id="cd00673">
    <property type="entry name" value="AlaRS_core"/>
    <property type="match status" value="1"/>
</dbReference>
<dbReference type="FunFam" id="3.10.310.40:FF:000001">
    <property type="entry name" value="Alanine--tRNA ligase"/>
    <property type="match status" value="1"/>
</dbReference>
<dbReference type="FunFam" id="3.30.54.20:FF:000001">
    <property type="entry name" value="Alanine--tRNA ligase"/>
    <property type="match status" value="1"/>
</dbReference>
<dbReference type="FunFam" id="3.30.930.10:FF:000046">
    <property type="entry name" value="Alanine--tRNA ligase"/>
    <property type="match status" value="1"/>
</dbReference>
<dbReference type="FunFam" id="3.30.980.10:FF:000004">
    <property type="entry name" value="Alanine--tRNA ligase, cytoplasmic"/>
    <property type="match status" value="1"/>
</dbReference>
<dbReference type="Gene3D" id="2.40.30.130">
    <property type="match status" value="1"/>
</dbReference>
<dbReference type="Gene3D" id="3.10.310.40">
    <property type="match status" value="1"/>
</dbReference>
<dbReference type="Gene3D" id="3.30.54.20">
    <property type="match status" value="1"/>
</dbReference>
<dbReference type="Gene3D" id="6.10.250.550">
    <property type="match status" value="1"/>
</dbReference>
<dbReference type="Gene3D" id="3.30.930.10">
    <property type="entry name" value="Bira Bifunctional Protein, Domain 2"/>
    <property type="match status" value="1"/>
</dbReference>
<dbReference type="Gene3D" id="3.30.980.10">
    <property type="entry name" value="Threonyl-trna Synthetase, Chain A, domain 2"/>
    <property type="match status" value="1"/>
</dbReference>
<dbReference type="HAMAP" id="MF_00036_B">
    <property type="entry name" value="Ala_tRNA_synth_B"/>
    <property type="match status" value="1"/>
</dbReference>
<dbReference type="InterPro" id="IPR045864">
    <property type="entry name" value="aa-tRNA-synth_II/BPL/LPL"/>
</dbReference>
<dbReference type="InterPro" id="IPR002318">
    <property type="entry name" value="Ala-tRNA-lgiase_IIc"/>
</dbReference>
<dbReference type="InterPro" id="IPR018162">
    <property type="entry name" value="Ala-tRNA-ligase_IIc_anticod-bd"/>
</dbReference>
<dbReference type="InterPro" id="IPR018165">
    <property type="entry name" value="Ala-tRNA-synth_IIc_core"/>
</dbReference>
<dbReference type="InterPro" id="IPR018164">
    <property type="entry name" value="Ala-tRNA-synth_IIc_N"/>
</dbReference>
<dbReference type="InterPro" id="IPR050058">
    <property type="entry name" value="Ala-tRNA_ligase"/>
</dbReference>
<dbReference type="InterPro" id="IPR023033">
    <property type="entry name" value="Ala_tRNA_ligase_euk/bac"/>
</dbReference>
<dbReference type="InterPro" id="IPR003156">
    <property type="entry name" value="DHHA1_dom"/>
</dbReference>
<dbReference type="InterPro" id="IPR018163">
    <property type="entry name" value="Thr/Ala-tRNA-synth_IIc_edit"/>
</dbReference>
<dbReference type="InterPro" id="IPR009000">
    <property type="entry name" value="Transl_B-barrel_sf"/>
</dbReference>
<dbReference type="InterPro" id="IPR012947">
    <property type="entry name" value="tRNA_SAD"/>
</dbReference>
<dbReference type="NCBIfam" id="TIGR00344">
    <property type="entry name" value="alaS"/>
    <property type="match status" value="1"/>
</dbReference>
<dbReference type="PANTHER" id="PTHR11777:SF9">
    <property type="entry name" value="ALANINE--TRNA LIGASE, CYTOPLASMIC"/>
    <property type="match status" value="1"/>
</dbReference>
<dbReference type="PANTHER" id="PTHR11777">
    <property type="entry name" value="ALANYL-TRNA SYNTHETASE"/>
    <property type="match status" value="1"/>
</dbReference>
<dbReference type="Pfam" id="PF02272">
    <property type="entry name" value="DHHA1"/>
    <property type="match status" value="1"/>
</dbReference>
<dbReference type="Pfam" id="PF01411">
    <property type="entry name" value="tRNA-synt_2c"/>
    <property type="match status" value="1"/>
</dbReference>
<dbReference type="Pfam" id="PF07973">
    <property type="entry name" value="tRNA_SAD"/>
    <property type="match status" value="1"/>
</dbReference>
<dbReference type="PRINTS" id="PR00980">
    <property type="entry name" value="TRNASYNTHALA"/>
</dbReference>
<dbReference type="SMART" id="SM00863">
    <property type="entry name" value="tRNA_SAD"/>
    <property type="match status" value="1"/>
</dbReference>
<dbReference type="SUPFAM" id="SSF55681">
    <property type="entry name" value="Class II aaRS and biotin synthetases"/>
    <property type="match status" value="1"/>
</dbReference>
<dbReference type="SUPFAM" id="SSF101353">
    <property type="entry name" value="Putative anticodon-binding domain of alanyl-tRNA synthetase (AlaRS)"/>
    <property type="match status" value="1"/>
</dbReference>
<dbReference type="SUPFAM" id="SSF55186">
    <property type="entry name" value="ThrRS/AlaRS common domain"/>
    <property type="match status" value="1"/>
</dbReference>
<dbReference type="SUPFAM" id="SSF50447">
    <property type="entry name" value="Translation proteins"/>
    <property type="match status" value="1"/>
</dbReference>
<dbReference type="PROSITE" id="PS50860">
    <property type="entry name" value="AA_TRNA_LIGASE_II_ALA"/>
    <property type="match status" value="1"/>
</dbReference>
<reference key="1">
    <citation type="journal article" date="2001" name="Science">
        <title>Complete genome sequence of a virulent isolate of Streptococcus pneumoniae.</title>
        <authorList>
            <person name="Tettelin H."/>
            <person name="Nelson K.E."/>
            <person name="Paulsen I.T."/>
            <person name="Eisen J.A."/>
            <person name="Read T.D."/>
            <person name="Peterson S.N."/>
            <person name="Heidelberg J.F."/>
            <person name="DeBoy R.T."/>
            <person name="Haft D.H."/>
            <person name="Dodson R.J."/>
            <person name="Durkin A.S."/>
            <person name="Gwinn M.L."/>
            <person name="Kolonay J.F."/>
            <person name="Nelson W.C."/>
            <person name="Peterson J.D."/>
            <person name="Umayam L.A."/>
            <person name="White O."/>
            <person name="Salzberg S.L."/>
            <person name="Lewis M.R."/>
            <person name="Radune D."/>
            <person name="Holtzapple E.K."/>
            <person name="Khouri H.M."/>
            <person name="Wolf A.M."/>
            <person name="Utterback T.R."/>
            <person name="Hansen C.L."/>
            <person name="McDonald L.A."/>
            <person name="Feldblyum T.V."/>
            <person name="Angiuoli S.V."/>
            <person name="Dickinson T."/>
            <person name="Hickey E.K."/>
            <person name="Holt I.E."/>
            <person name="Loftus B.J."/>
            <person name="Yang F."/>
            <person name="Smith H.O."/>
            <person name="Venter J.C."/>
            <person name="Dougherty B.A."/>
            <person name="Morrison D.A."/>
            <person name="Hollingshead S.K."/>
            <person name="Fraser C.M."/>
        </authorList>
    </citation>
    <scope>NUCLEOTIDE SEQUENCE [LARGE SCALE GENOMIC DNA]</scope>
    <source>
        <strain>ATCC BAA-334 / TIGR4</strain>
    </source>
</reference>
<gene>
    <name evidence="1" type="primary">alaS</name>
    <name type="ordered locus">SP_1383</name>
</gene>
<proteinExistence type="inferred from homology"/>
<feature type="chain" id="PRO_0000075214" description="Alanine--tRNA ligase">
    <location>
        <begin position="1"/>
        <end position="872"/>
    </location>
</feature>
<feature type="binding site" evidence="1">
    <location>
        <position position="567"/>
    </location>
    <ligand>
        <name>Zn(2+)</name>
        <dbReference type="ChEBI" id="CHEBI:29105"/>
    </ligand>
</feature>
<feature type="binding site" evidence="1">
    <location>
        <position position="571"/>
    </location>
    <ligand>
        <name>Zn(2+)</name>
        <dbReference type="ChEBI" id="CHEBI:29105"/>
    </ligand>
</feature>
<feature type="binding site" evidence="1">
    <location>
        <position position="669"/>
    </location>
    <ligand>
        <name>Zn(2+)</name>
        <dbReference type="ChEBI" id="CHEBI:29105"/>
    </ligand>
</feature>
<feature type="binding site" evidence="1">
    <location>
        <position position="673"/>
    </location>
    <ligand>
        <name>Zn(2+)</name>
        <dbReference type="ChEBI" id="CHEBI:29105"/>
    </ligand>
</feature>
<name>SYA_STRPN</name>
<comment type="function">
    <text evidence="1">Catalyzes the attachment of alanine to tRNA(Ala) in a two-step reaction: alanine is first activated by ATP to form Ala-AMP and then transferred to the acceptor end of tRNA(Ala). Also edits incorrectly charged Ser-tRNA(Ala) and Gly-tRNA(Ala) via its editing domain.</text>
</comment>
<comment type="catalytic activity">
    <reaction evidence="1">
        <text>tRNA(Ala) + L-alanine + ATP = L-alanyl-tRNA(Ala) + AMP + diphosphate</text>
        <dbReference type="Rhea" id="RHEA:12540"/>
        <dbReference type="Rhea" id="RHEA-COMP:9657"/>
        <dbReference type="Rhea" id="RHEA-COMP:9923"/>
        <dbReference type="ChEBI" id="CHEBI:30616"/>
        <dbReference type="ChEBI" id="CHEBI:33019"/>
        <dbReference type="ChEBI" id="CHEBI:57972"/>
        <dbReference type="ChEBI" id="CHEBI:78442"/>
        <dbReference type="ChEBI" id="CHEBI:78497"/>
        <dbReference type="ChEBI" id="CHEBI:456215"/>
        <dbReference type="EC" id="6.1.1.7"/>
    </reaction>
</comment>
<comment type="cofactor">
    <cofactor evidence="1">
        <name>Zn(2+)</name>
        <dbReference type="ChEBI" id="CHEBI:29105"/>
    </cofactor>
    <text evidence="1">Binds 1 zinc ion per subunit.</text>
</comment>
<comment type="subcellular location">
    <subcellularLocation>
        <location evidence="1">Cytoplasm</location>
    </subcellularLocation>
</comment>
<comment type="domain">
    <text evidence="1">Consists of three domains; the N-terminal catalytic domain, the editing domain and the C-terminal C-Ala domain. The editing domain removes incorrectly charged amino acids, while the C-Ala domain, along with tRNA(Ala), serves as a bridge to cooperatively bring together the editing and aminoacylation centers thus stimulating deacylation of misacylated tRNAs.</text>
</comment>
<comment type="similarity">
    <text evidence="1">Belongs to the class-II aminoacyl-tRNA synthetase family.</text>
</comment>
<organism>
    <name type="scientific">Streptococcus pneumoniae serotype 4 (strain ATCC BAA-334 / TIGR4)</name>
    <dbReference type="NCBI Taxonomy" id="170187"/>
    <lineage>
        <taxon>Bacteria</taxon>
        <taxon>Bacillati</taxon>
        <taxon>Bacillota</taxon>
        <taxon>Bacilli</taxon>
        <taxon>Lactobacillales</taxon>
        <taxon>Streptococcaceae</taxon>
        <taxon>Streptococcus</taxon>
    </lineage>
</organism>
<evidence type="ECO:0000255" key="1">
    <source>
        <dbReference type="HAMAP-Rule" id="MF_00036"/>
    </source>
</evidence>
<keyword id="KW-0030">Aminoacyl-tRNA synthetase</keyword>
<keyword id="KW-0067">ATP-binding</keyword>
<keyword id="KW-0963">Cytoplasm</keyword>
<keyword id="KW-0436">Ligase</keyword>
<keyword id="KW-0479">Metal-binding</keyword>
<keyword id="KW-0547">Nucleotide-binding</keyword>
<keyword id="KW-0648">Protein biosynthesis</keyword>
<keyword id="KW-1185">Reference proteome</keyword>
<keyword id="KW-0694">RNA-binding</keyword>
<keyword id="KW-0820">tRNA-binding</keyword>
<keyword id="KW-0862">Zinc</keyword>
<sequence>MKQLSSAQVRQMWLDFWATKGHSVEPSVSLVPVNDPTLLWINSGVATLKKYFDGTIIPENPRITNAQKAIRTNDIENVGKTARHHTMFEMLGNFSIGDYFRDEAITWAYELLTSPEWFDFPAEKLYMTYYPDDKDSYNRWIEVGVDPSHLIPIEDNFWEIGAGPSGPDTEIFFDRGEAFDPENIGLRLLAEDIENDRYIEIWNIVLSQFNADPAVPRSEYKELPHKNIDTGAGLERLVAVIQGAKTNFETDLFMPIIREVEKLSGKVYDQDGDNMSFKVIADHIRSLSFAIGDGALPGNEGRGYVLRRLLRRASMHGQKLGINEPFLYKLVPTVGKIMESYYPEVLEKRDFIEKIVKSEEESFARTLHSGQHFAQGIVADLKEKGQSVIAGSDVFKLYDTYGFPVELTEEIAEEAGMTVDREGFEAAMKEQQERARASAVKGGSMGMQNETLQNITVESVFNYNASQLSSKLVAIVADNAEVGAVSEGTASLIFAETSFYAEMGGQVADYGQILDESGKVVATVTNVQKAPNGQALHTVEVLAPLALNQEYTLAIDSNRRHRVMKNHTATHLLHAALHNILGNHATQAGSLNEVEFLRFDFTHFQAVTAEELRAIEQQVNEKIWEALEVKTVETDIDTAKEMGAMALFGEKYGKEVRVVTIGDYSIELCGGTHVDNTSEIGLFKIVKEEGIGSGTRRILAVTGKEAFEAYREQEDALKAIAATLKAPQVKEVPHKVEGLQEQLRQLQKENAELKEKAAAAAAGDIFKDVKEVNGHRYIASQVSVSDAGALRTFADNWKQKDYSDLLVLVAAIGDKVNVLVASKTKDLHAGNLVKELAPIIDGRGGGKPDMAMAGGSNQPKIQELLDAVAGKL</sequence>